<proteinExistence type="evidence at protein level"/>
<dbReference type="EMBL" id="AE005672">
    <property type="protein sequence ID" value="AAK75869.1"/>
    <property type="molecule type" value="Genomic_DNA"/>
</dbReference>
<dbReference type="RefSeq" id="WP_000669747.1">
    <property type="nucleotide sequence ID" value="NZ_CP155539.1"/>
</dbReference>
<dbReference type="PDB" id="5G5Y">
    <property type="method" value="X-ray"/>
    <property type="resolution" value="1.73 A"/>
    <property type="chains" value="A/B=47-538"/>
</dbReference>
<dbReference type="PDB" id="5G5Z">
    <property type="method" value="X-ray"/>
    <property type="resolution" value="2.01 A"/>
    <property type="chains" value="A/B/C/D=47-537"/>
</dbReference>
<dbReference type="PDB" id="5G60">
    <property type="method" value="X-ray"/>
    <property type="resolution" value="1.99 A"/>
    <property type="chains" value="A/B/C/D=47-538"/>
</dbReference>
<dbReference type="PDB" id="5G61">
    <property type="method" value="X-ray"/>
    <property type="resolution" value="2.40 A"/>
    <property type="chains" value="A/B/C/D=47-538"/>
</dbReference>
<dbReference type="PDB" id="5G62">
    <property type="method" value="X-ray"/>
    <property type="resolution" value="1.99 A"/>
    <property type="chains" value="A/B=47-538"/>
</dbReference>
<dbReference type="PDBsum" id="5G5Y"/>
<dbReference type="PDBsum" id="5G5Z"/>
<dbReference type="PDBsum" id="5G60"/>
<dbReference type="PDBsum" id="5G61"/>
<dbReference type="PDBsum" id="5G62"/>
<dbReference type="SMR" id="A0A0H2URD6"/>
<dbReference type="PaxDb" id="170187-SP_1796"/>
<dbReference type="EnsemblBacteria" id="AAK75869">
    <property type="protein sequence ID" value="AAK75869"/>
    <property type="gene ID" value="SP_1796"/>
</dbReference>
<dbReference type="KEGG" id="spn:SP_1796"/>
<dbReference type="eggNOG" id="COG1653">
    <property type="taxonomic scope" value="Bacteria"/>
</dbReference>
<dbReference type="PhylomeDB" id="A0A0H2URD6"/>
<dbReference type="BioCyc" id="SPNE170187:G1FZB-1827-MONOMER"/>
<dbReference type="Proteomes" id="UP000000585">
    <property type="component" value="Chromosome"/>
</dbReference>
<dbReference type="GO" id="GO:0005886">
    <property type="term" value="C:plasma membrane"/>
    <property type="evidence" value="ECO:0007669"/>
    <property type="project" value="UniProtKB-SubCell"/>
</dbReference>
<dbReference type="GO" id="GO:0046872">
    <property type="term" value="F:metal ion binding"/>
    <property type="evidence" value="ECO:0007669"/>
    <property type="project" value="UniProtKB-KW"/>
</dbReference>
<dbReference type="GO" id="GO:0015774">
    <property type="term" value="P:polysaccharide transport"/>
    <property type="evidence" value="ECO:0007669"/>
    <property type="project" value="UniProtKB-KW"/>
</dbReference>
<dbReference type="CDD" id="cd13581">
    <property type="entry name" value="PBP2_AlgQ_like_2"/>
    <property type="match status" value="1"/>
</dbReference>
<dbReference type="Gene3D" id="3.40.190.10">
    <property type="entry name" value="Periplasmic binding protein-like II"/>
    <property type="match status" value="2"/>
</dbReference>
<dbReference type="InterPro" id="IPR050490">
    <property type="entry name" value="Bact_solute-bd_prot1"/>
</dbReference>
<dbReference type="PANTHER" id="PTHR43649:SF17">
    <property type="entry name" value="ABC TRANSPORTER SOLUTE BINDING PROTEIN-SUGAR TRANSPORT"/>
    <property type="match status" value="1"/>
</dbReference>
<dbReference type="PANTHER" id="PTHR43649">
    <property type="entry name" value="ARABINOSE-BINDING PROTEIN-RELATED"/>
    <property type="match status" value="1"/>
</dbReference>
<dbReference type="SUPFAM" id="SSF53850">
    <property type="entry name" value="Periplasmic binding protein-like II"/>
    <property type="match status" value="1"/>
</dbReference>
<dbReference type="PROSITE" id="PS51257">
    <property type="entry name" value="PROKAR_LIPOPROTEIN"/>
    <property type="match status" value="1"/>
</dbReference>
<reference evidence="7 8" key="1">
    <citation type="journal article" date="2001" name="Science">
        <title>Complete genome sequence of a virulent isolate of Streptococcus pneumoniae.</title>
        <authorList>
            <person name="Tettelin H."/>
            <person name="Nelson K.E."/>
            <person name="Paulsen I.T."/>
            <person name="Eisen J.A."/>
            <person name="Read T.D."/>
            <person name="Peterson S.N."/>
            <person name="Heidelberg J.F."/>
            <person name="DeBoy R.T."/>
            <person name="Haft D.H."/>
            <person name="Dodson R.J."/>
            <person name="Durkin A.S."/>
            <person name="Gwinn M.L."/>
            <person name="Kolonay J.F."/>
            <person name="Nelson W.C."/>
            <person name="Peterson J.D."/>
            <person name="Umayam L.A."/>
            <person name="White O."/>
            <person name="Salzberg S.L."/>
            <person name="Lewis M.R."/>
            <person name="Radune D."/>
            <person name="Holtzapple E.K."/>
            <person name="Khouri H.M."/>
            <person name="Wolf A.M."/>
            <person name="Utterback T.R."/>
            <person name="Hansen C.L."/>
            <person name="McDonald L.A."/>
            <person name="Feldblyum T.V."/>
            <person name="Angiuoli S.V."/>
            <person name="Dickinson T."/>
            <person name="Hickey E.K."/>
            <person name="Holt I.E."/>
            <person name="Loftus B.J."/>
            <person name="Yang F."/>
            <person name="Smith H.O."/>
            <person name="Venter J.C."/>
            <person name="Dougherty B.A."/>
            <person name="Morrison D.A."/>
            <person name="Hollingshead S.K."/>
            <person name="Fraser C.M."/>
        </authorList>
    </citation>
    <scope>NUCLEOTIDE SEQUENCE [LARGE SCALE GENOMIC DNA]</scope>
    <source>
        <strain evidence="8">ATCC BAA-334 / TIGR4</strain>
    </source>
</reference>
<reference key="2">
    <citation type="journal article" date="2013" name="J. Bacteriol.">
        <title>The ABC transporter encoded at the pneumococcal fructooligosaccharide utilization locus determines the ability to utilize long- and short-chain fructooligosaccharides.</title>
        <authorList>
            <person name="Linke C.M."/>
            <person name="Woodiga S.A."/>
            <person name="Meyers D.J."/>
            <person name="Buckwalter C.M."/>
            <person name="Salhi H.E."/>
            <person name="King S.J."/>
        </authorList>
    </citation>
    <scope>FUNCTION</scope>
    <scope>SUBUNIT</scope>
    <source>
        <strain evidence="3">ATCC BAA-334 / TIGR4</strain>
    </source>
</reference>
<reference evidence="9 10 11 12 13" key="3">
    <citation type="journal article" date="2017" name="Structure">
        <title>Structural Basis for Regulation and Specificity of Fructooligosaccharide Import in Streptococcus pneumoniae.</title>
        <authorList>
            <person name="Culurgioni S."/>
            <person name="Harris G."/>
            <person name="Singh A.K."/>
            <person name="King S.J."/>
            <person name="Walsh M.A."/>
        </authorList>
    </citation>
    <scope>X-RAY CRYSTALLOGRAPHY (1.73 ANGSTROMS) OF 47-538 AND IN COMPLEXES WITH KESTOSE; NYSTOSE AND CALCIUM AND MUTANT ALA-223/ALA-224 IN COMPLEX WITH FRUCTOFURANOSYL-NYSTOSE</scope>
    <scope>FUNCTION</scope>
    <scope>DOMAIN</scope>
    <scope>MUTAGENESIS OF GLU-167; HIS-177; ASP-223; GLU-224; TRP-314; ASN-318; TRP-384; ARG-419 AND GLU-423</scope>
    <source>
        <strain evidence="4">ATCC BAA-334 / TIGR4</strain>
    </source>
</reference>
<accession>A0A0H2URD6</accession>
<name>FUSA_STRPN</name>
<sequence length="538" mass="60992">MKFKTFSKSAVLLTASLAVLAACGSKNTASSPDYKLEGVTFPLQEKKTLKFMTASSPLSPKDPNEKLILQRLEKETGVHIDWTNYQSDFAEKRNLDISSGDLPDAIHNDGASDVDLMNWAKKGVIIPVEDLIDKYMPNLKKILDEKPEYKALMTAPDGHIYSFPWIEELGDGKESIHSVNDMAWINKDWLKKLGLEMPKTTDDLIKVLEAFKNGDPNGNGEADEIPFSFISGNGNEDFKFLFAAFGIGDNDDHLVVGNDGKVDFTADNDNYKEGVKFIRQLQEKGLIDKEAFEHDWNSYIAKGHDQKFGVYFTWDKNNVTGSNESYDVLPVLAGPSGQKHVARTNGMGFARDKMVITSVNKNLELTAKWIDAQYAPLQSVQNNWGTYGDDKQQNIFELDQASNSLKHLPLNGTAPAELRQKTEVGGPLAILDSYYGKVTTMPDDAKWRLDLIKEYYVPYMSNVNNYPRVFMTQEDLDKIAHIEADMNDYIYRKRAEWIVNGNIDTEWDDYKKELEKYGLSDYLAIKQKYYDQYQANKN</sequence>
<gene>
    <name evidence="3 4" type="primary">fusA</name>
    <name evidence="7" type="ordered locus">SP_1796</name>
</gene>
<evidence type="ECO:0000255" key="1">
    <source>
        <dbReference type="PROSITE-ProRule" id="PRU00303"/>
    </source>
</evidence>
<evidence type="ECO:0000269" key="2">
    <source>
    </source>
</evidence>
<evidence type="ECO:0000303" key="3">
    <source>
    </source>
</evidence>
<evidence type="ECO:0000303" key="4">
    <source>
    </source>
</evidence>
<evidence type="ECO:0000305" key="5"/>
<evidence type="ECO:0000305" key="6">
    <source>
    </source>
</evidence>
<evidence type="ECO:0000312" key="7">
    <source>
        <dbReference type="EMBL" id="AAK75869.1"/>
    </source>
</evidence>
<evidence type="ECO:0000312" key="8">
    <source>
        <dbReference type="Proteomes" id="UP000000585"/>
    </source>
</evidence>
<evidence type="ECO:0007744" key="9">
    <source>
        <dbReference type="PDB" id="5G5Y"/>
    </source>
</evidence>
<evidence type="ECO:0007744" key="10">
    <source>
        <dbReference type="PDB" id="5G5Z"/>
    </source>
</evidence>
<evidence type="ECO:0007744" key="11">
    <source>
        <dbReference type="PDB" id="5G60"/>
    </source>
</evidence>
<evidence type="ECO:0007744" key="12">
    <source>
        <dbReference type="PDB" id="5G61"/>
    </source>
</evidence>
<evidence type="ECO:0007744" key="13">
    <source>
        <dbReference type="PDB" id="5G62"/>
    </source>
</evidence>
<evidence type="ECO:0007829" key="14">
    <source>
        <dbReference type="PDB" id="5G5Y"/>
    </source>
</evidence>
<feature type="signal peptide" evidence="1">
    <location>
        <begin position="1"/>
        <end position="22"/>
    </location>
</feature>
<feature type="chain" id="PRO_5002599567" description="Fructooligosaccharide ABC transporter substrate-binding protein FusA" evidence="1">
    <location>
        <begin position="23"/>
        <end position="538"/>
    </location>
</feature>
<feature type="binding site" evidence="2 10 11 12 13">
    <location>
        <position position="167"/>
    </location>
    <ligand>
        <name>substrate</name>
    </ligand>
</feature>
<feature type="binding site" evidence="2 9 10 11">
    <location>
        <position position="215"/>
    </location>
    <ligand>
        <name>Ca(2+)</name>
        <dbReference type="ChEBI" id="CHEBI:29108"/>
        <label>1</label>
    </ligand>
</feature>
<feature type="binding site" evidence="2 9 10 11">
    <location>
        <position position="217"/>
    </location>
    <ligand>
        <name>Ca(2+)</name>
        <dbReference type="ChEBI" id="CHEBI:29108"/>
        <label>1</label>
    </ligand>
</feature>
<feature type="binding site" evidence="2 9 10 11">
    <location>
        <position position="219"/>
    </location>
    <ligand>
        <name>Ca(2+)</name>
        <dbReference type="ChEBI" id="CHEBI:29108"/>
        <label>1</label>
    </ligand>
</feature>
<feature type="binding site" evidence="2 9 10 11">
    <location>
        <position position="221"/>
    </location>
    <ligand>
        <name>Ca(2+)</name>
        <dbReference type="ChEBI" id="CHEBI:29108"/>
        <label>1</label>
    </ligand>
</feature>
<feature type="binding site" evidence="2 9 10 11">
    <location>
        <position position="223"/>
    </location>
    <ligand>
        <name>Ca(2+)</name>
        <dbReference type="ChEBI" id="CHEBI:29108"/>
        <label>1</label>
    </ligand>
</feature>
<feature type="binding site" evidence="2 9 10 11">
    <location>
        <position position="224"/>
    </location>
    <ligand>
        <name>Ca(2+)</name>
        <dbReference type="ChEBI" id="CHEBI:29108"/>
        <label>1</label>
    </ligand>
</feature>
<feature type="binding site" evidence="2 10 11 12 13">
    <location>
        <position position="235"/>
    </location>
    <ligand>
        <name>substrate</name>
    </ligand>
</feature>
<feature type="binding site" evidence="2 9 10 11">
    <location>
        <position position="263"/>
    </location>
    <ligand>
        <name>Ca(2+)</name>
        <dbReference type="ChEBI" id="CHEBI:29108"/>
        <label>2</label>
    </ligand>
</feature>
<feature type="binding site" evidence="2 9 10 11">
    <location>
        <position position="264"/>
    </location>
    <ligand>
        <name>Ca(2+)</name>
        <dbReference type="ChEBI" id="CHEBI:29108"/>
        <label>2</label>
    </ligand>
</feature>
<feature type="binding site" evidence="2 9 10 11">
    <location>
        <position position="267"/>
    </location>
    <ligand>
        <name>Ca(2+)</name>
        <dbReference type="ChEBI" id="CHEBI:29108"/>
        <label>2</label>
    </ligand>
</feature>
<feature type="binding site" evidence="2 9 10 11">
    <location>
        <position position="268"/>
    </location>
    <ligand>
        <name>Ca(2+)</name>
        <dbReference type="ChEBI" id="CHEBI:29108"/>
        <label>2</label>
    </ligand>
</feature>
<feature type="binding site" evidence="2 10 11 12 13">
    <location>
        <position position="314"/>
    </location>
    <ligand>
        <name>substrate</name>
    </ligand>
</feature>
<feature type="binding site" evidence="2 10 11 12 13">
    <location>
        <position position="318"/>
    </location>
    <ligand>
        <name>substrate</name>
    </ligand>
</feature>
<feature type="binding site" evidence="2 10 11 12 13">
    <location>
        <position position="353"/>
    </location>
    <ligand>
        <name>substrate</name>
    </ligand>
</feature>
<feature type="binding site" evidence="2 10 11 12 13">
    <location>
        <position position="384"/>
    </location>
    <ligand>
        <name>substrate</name>
    </ligand>
</feature>
<feature type="binding site" evidence="2 10 11 12 13">
    <location>
        <position position="419"/>
    </location>
    <ligand>
        <name>substrate</name>
    </ligand>
</feature>
<feature type="binding site" evidence="2 10 11 12 13">
    <location>
        <position position="423"/>
    </location>
    <ligand>
        <name>substrate</name>
    </ligand>
</feature>
<feature type="lipid moiety-binding region" description="N-palmitoyl cysteine" evidence="1">
    <location>
        <position position="23"/>
    </location>
</feature>
<feature type="lipid moiety-binding region" description="S-diacylglycerol cysteine" evidence="1">
    <location>
        <position position="23"/>
    </location>
</feature>
<feature type="mutagenesis site" description="Loss of fructooligosaccharide (FOS) binding. No growth on nystose." evidence="2">
    <original>E</original>
    <variation>A</variation>
    <location>
        <position position="167"/>
    </location>
</feature>
<feature type="mutagenesis site" description="2-fold decrease in fructooligosaccharide (FOS) binding compared to the wild-type. Impaired growth on nystose." evidence="2">
    <original>H</original>
    <variation>A</variation>
    <location>
        <position position="177"/>
    </location>
</feature>
<feature type="mutagenesis site" description="No effect in fructooligosaccharide (FOS) binding, but no growth on nystose; when associated with A-224." evidence="2">
    <original>D</original>
    <variation>A</variation>
    <location>
        <position position="223"/>
    </location>
</feature>
<feature type="mutagenesis site" description="No effect in fructooligosaccharide (FOS) binding, but no growth on nystose; when associated with A-223." evidence="2">
    <original>E</original>
    <variation>A</variation>
    <location>
        <position position="224"/>
    </location>
</feature>
<feature type="mutagenesis site" description="Loss of fructooligosaccharide (FOS) binding. No growth on nystose." evidence="2">
    <original>W</original>
    <variation>A</variation>
    <location>
        <position position="314"/>
    </location>
</feature>
<feature type="mutagenesis site" description="Significant decrease in fructooligosaccharide (FOS) binding. Impaired growth on nystose." evidence="2">
    <original>N</original>
    <variation>A</variation>
    <location>
        <position position="318"/>
    </location>
</feature>
<feature type="mutagenesis site" description="Significant decrease in fructooligosaccharide (FOS) binding. Impaired growth on nystose." evidence="2">
    <original>W</original>
    <variation>A</variation>
    <location>
        <position position="384"/>
    </location>
</feature>
<feature type="mutagenesis site" description="Loss of fructooligosaccharide (FOS) binding. No growth on nystose." evidence="2">
    <original>R</original>
    <variation>A</variation>
    <location>
        <position position="419"/>
    </location>
</feature>
<feature type="mutagenesis site" description="10-fold decrease in fructooligosaccharide (FOS) binding compared to the wild-type. Impaired growth on nystose." evidence="2">
    <original>E</original>
    <variation>A</variation>
    <location>
        <position position="423"/>
    </location>
</feature>
<feature type="strand" evidence="14">
    <location>
        <begin position="47"/>
        <end position="54"/>
    </location>
</feature>
<feature type="helix" evidence="14">
    <location>
        <begin position="63"/>
        <end position="65"/>
    </location>
</feature>
<feature type="helix" evidence="14">
    <location>
        <begin position="67"/>
        <end position="76"/>
    </location>
</feature>
<feature type="strand" evidence="14">
    <location>
        <begin position="78"/>
        <end position="85"/>
    </location>
</feature>
<feature type="helix" evidence="14">
    <location>
        <begin position="89"/>
        <end position="99"/>
    </location>
</feature>
<feature type="strand" evidence="14">
    <location>
        <begin position="104"/>
        <end position="108"/>
    </location>
</feature>
<feature type="helix" evidence="14">
    <location>
        <begin position="113"/>
        <end position="121"/>
    </location>
</feature>
<feature type="helix" evidence="14">
    <location>
        <begin position="129"/>
        <end position="135"/>
    </location>
</feature>
<feature type="helix" evidence="14">
    <location>
        <begin position="137"/>
        <end position="145"/>
    </location>
</feature>
<feature type="helix" evidence="14">
    <location>
        <begin position="148"/>
        <end position="153"/>
    </location>
</feature>
<feature type="strand" evidence="14">
    <location>
        <begin position="165"/>
        <end position="167"/>
    </location>
</feature>
<feature type="helix" evidence="14">
    <location>
        <begin position="172"/>
        <end position="174"/>
    </location>
</feature>
<feature type="strand" evidence="14">
    <location>
        <begin position="180"/>
        <end position="186"/>
    </location>
</feature>
<feature type="helix" evidence="14">
    <location>
        <begin position="187"/>
        <end position="192"/>
    </location>
</feature>
<feature type="helix" evidence="14">
    <location>
        <begin position="201"/>
        <end position="213"/>
    </location>
</feature>
<feature type="strand" evidence="14">
    <location>
        <begin position="219"/>
        <end position="221"/>
    </location>
</feature>
<feature type="strand" evidence="14">
    <location>
        <begin position="225"/>
        <end position="227"/>
    </location>
</feature>
<feature type="strand" evidence="14">
    <location>
        <begin position="232"/>
        <end position="234"/>
    </location>
</feature>
<feature type="helix" evidence="14">
    <location>
        <begin position="239"/>
        <end position="245"/>
    </location>
</feature>
<feature type="strand" evidence="14">
    <location>
        <begin position="253"/>
        <end position="256"/>
    </location>
</feature>
<feature type="strand" evidence="14">
    <location>
        <begin position="262"/>
        <end position="264"/>
    </location>
</feature>
<feature type="helix" evidence="14">
    <location>
        <begin position="265"/>
        <end position="267"/>
    </location>
</feature>
<feature type="helix" evidence="14">
    <location>
        <begin position="269"/>
        <end position="283"/>
    </location>
</feature>
<feature type="turn" evidence="14">
    <location>
        <begin position="289"/>
        <end position="293"/>
    </location>
</feature>
<feature type="helix" evidence="14">
    <location>
        <begin position="296"/>
        <end position="304"/>
    </location>
</feature>
<feature type="strand" evidence="14">
    <location>
        <begin position="308"/>
        <end position="314"/>
    </location>
</feature>
<feature type="helix" evidence="14">
    <location>
        <begin position="316"/>
        <end position="318"/>
    </location>
</feature>
<feature type="strand" evidence="14">
    <location>
        <begin position="322"/>
        <end position="328"/>
    </location>
</feature>
<feature type="strand" evidence="14">
    <location>
        <begin position="348"/>
        <end position="351"/>
    </location>
</feature>
<feature type="strand" evidence="14">
    <location>
        <begin position="353"/>
        <end position="357"/>
    </location>
</feature>
<feature type="helix" evidence="14">
    <location>
        <begin position="363"/>
        <end position="373"/>
    </location>
</feature>
<feature type="helix" evidence="14">
    <location>
        <begin position="376"/>
        <end position="384"/>
    </location>
</feature>
<feature type="strand" evidence="14">
    <location>
        <begin position="390"/>
        <end position="392"/>
    </location>
</feature>
<feature type="strand" evidence="14">
    <location>
        <begin position="395"/>
        <end position="399"/>
    </location>
</feature>
<feature type="turn" evidence="14">
    <location>
        <begin position="400"/>
        <end position="403"/>
    </location>
</feature>
<feature type="strand" evidence="14">
    <location>
        <begin position="404"/>
        <end position="407"/>
    </location>
</feature>
<feature type="helix" evidence="14">
    <location>
        <begin position="414"/>
        <end position="422"/>
    </location>
</feature>
<feature type="strand" evidence="14">
    <location>
        <begin position="426"/>
        <end position="430"/>
    </location>
</feature>
<feature type="helix" evidence="14">
    <location>
        <begin position="432"/>
        <end position="434"/>
    </location>
</feature>
<feature type="turn" evidence="14">
    <location>
        <begin position="435"/>
        <end position="437"/>
    </location>
</feature>
<feature type="helix" evidence="14">
    <location>
        <begin position="443"/>
        <end position="455"/>
    </location>
</feature>
<feature type="helix" evidence="14">
    <location>
        <begin position="457"/>
        <end position="459"/>
    </location>
</feature>
<feature type="helix" evidence="14">
    <location>
        <begin position="473"/>
        <end position="499"/>
    </location>
</feature>
<feature type="helix" evidence="14">
    <location>
        <begin position="503"/>
        <end position="516"/>
    </location>
</feature>
<feature type="helix" evidence="14">
    <location>
        <begin position="519"/>
        <end position="536"/>
    </location>
</feature>
<protein>
    <recommendedName>
        <fullName evidence="5">Fructooligosaccharide ABC transporter substrate-binding protein FusA</fullName>
        <shortName evidence="5">FOS ABC transporter SBP FusA</shortName>
    </recommendedName>
</protein>
<organism evidence="7">
    <name type="scientific">Streptococcus pneumoniae serotype 4 (strain ATCC BAA-334 / TIGR4)</name>
    <dbReference type="NCBI Taxonomy" id="170187"/>
    <lineage>
        <taxon>Bacteria</taxon>
        <taxon>Bacillati</taxon>
        <taxon>Bacillota</taxon>
        <taxon>Bacilli</taxon>
        <taxon>Lactobacillales</taxon>
        <taxon>Streptococcaceae</taxon>
        <taxon>Streptococcus</taxon>
    </lineage>
</organism>
<comment type="function">
    <text evidence="2 6">Part of the ABC transporter complex FusABC-MsmK involved in short- and long-chain fructooligosaccharide (FOS) import. Required for the utilization of long-chain FOSs (PubMed:23264576). Binds kestose, nystose, fructofuranosyl-nystose and inulin, but not sucrose. Has a preference for long-chain FOSs (tetrasaccharides and larger) (PubMed:27939783).</text>
</comment>
<comment type="subunit">
    <text evidence="6">The complex is composed of two ATP-binding proteins (MsmK), two transmembrane proteins (FusB and FusC) and a solute-binding protein (FusA).</text>
</comment>
<comment type="subcellular location">
    <subcellularLocation>
        <location evidence="1">Cell membrane</location>
        <topology evidence="1">Lipid-anchor</topology>
    </subcellularLocation>
</comment>
<comment type="domain">
    <text evidence="2">The calcium-binding site is essential for the translocation of fructooligosaccharide (FOS) substrates by the transporter.</text>
</comment>
<comment type="similarity">
    <text evidence="5">Belongs to the bacterial solute-binding protein 1 family.</text>
</comment>
<keyword id="KW-0002">3D-structure</keyword>
<keyword id="KW-0106">Calcium</keyword>
<keyword id="KW-1003">Cell membrane</keyword>
<keyword id="KW-0449">Lipoprotein</keyword>
<keyword id="KW-0472">Membrane</keyword>
<keyword id="KW-0479">Metal-binding</keyword>
<keyword id="KW-0564">Palmitate</keyword>
<keyword id="KW-0625">Polysaccharide transport</keyword>
<keyword id="KW-1185">Reference proteome</keyword>
<keyword id="KW-0732">Signal</keyword>
<keyword id="KW-0762">Sugar transport</keyword>
<keyword id="KW-0813">Transport</keyword>